<dbReference type="EC" id="1.5.1.5" evidence="1"/>
<dbReference type="EC" id="3.5.4.9" evidence="1"/>
<dbReference type="EMBL" id="CP000267">
    <property type="protein sequence ID" value="ABD69933.1"/>
    <property type="molecule type" value="Genomic_DNA"/>
</dbReference>
<dbReference type="RefSeq" id="WP_011464501.1">
    <property type="nucleotide sequence ID" value="NC_007908.1"/>
</dbReference>
<dbReference type="SMR" id="Q21WC0"/>
<dbReference type="STRING" id="338969.Rfer_2209"/>
<dbReference type="KEGG" id="rfr:Rfer_2209"/>
<dbReference type="eggNOG" id="COG0190">
    <property type="taxonomic scope" value="Bacteria"/>
</dbReference>
<dbReference type="HOGENOM" id="CLU_034045_2_1_4"/>
<dbReference type="OrthoDB" id="9803580at2"/>
<dbReference type="UniPathway" id="UPA00193"/>
<dbReference type="Proteomes" id="UP000008332">
    <property type="component" value="Chromosome"/>
</dbReference>
<dbReference type="GO" id="GO:0005829">
    <property type="term" value="C:cytosol"/>
    <property type="evidence" value="ECO:0007669"/>
    <property type="project" value="TreeGrafter"/>
</dbReference>
<dbReference type="GO" id="GO:0004477">
    <property type="term" value="F:methenyltetrahydrofolate cyclohydrolase activity"/>
    <property type="evidence" value="ECO:0007669"/>
    <property type="project" value="UniProtKB-UniRule"/>
</dbReference>
<dbReference type="GO" id="GO:0004488">
    <property type="term" value="F:methylenetetrahydrofolate dehydrogenase (NADP+) activity"/>
    <property type="evidence" value="ECO:0007669"/>
    <property type="project" value="UniProtKB-UniRule"/>
</dbReference>
<dbReference type="GO" id="GO:0000105">
    <property type="term" value="P:L-histidine biosynthetic process"/>
    <property type="evidence" value="ECO:0007669"/>
    <property type="project" value="UniProtKB-KW"/>
</dbReference>
<dbReference type="GO" id="GO:0009086">
    <property type="term" value="P:methionine biosynthetic process"/>
    <property type="evidence" value="ECO:0007669"/>
    <property type="project" value="UniProtKB-KW"/>
</dbReference>
<dbReference type="GO" id="GO:0006164">
    <property type="term" value="P:purine nucleotide biosynthetic process"/>
    <property type="evidence" value="ECO:0007669"/>
    <property type="project" value="UniProtKB-KW"/>
</dbReference>
<dbReference type="GO" id="GO:0035999">
    <property type="term" value="P:tetrahydrofolate interconversion"/>
    <property type="evidence" value="ECO:0007669"/>
    <property type="project" value="UniProtKB-UniRule"/>
</dbReference>
<dbReference type="CDD" id="cd01080">
    <property type="entry name" value="NAD_bind_m-THF_DH_Cyclohyd"/>
    <property type="match status" value="1"/>
</dbReference>
<dbReference type="FunFam" id="3.40.50.720:FF:000094">
    <property type="entry name" value="Bifunctional protein FolD"/>
    <property type="match status" value="1"/>
</dbReference>
<dbReference type="FunFam" id="3.40.50.10860:FF:000005">
    <property type="entry name" value="C-1-tetrahydrofolate synthase, cytoplasmic, putative"/>
    <property type="match status" value="1"/>
</dbReference>
<dbReference type="Gene3D" id="3.40.50.10860">
    <property type="entry name" value="Leucine Dehydrogenase, chain A, domain 1"/>
    <property type="match status" value="1"/>
</dbReference>
<dbReference type="Gene3D" id="3.40.50.720">
    <property type="entry name" value="NAD(P)-binding Rossmann-like Domain"/>
    <property type="match status" value="1"/>
</dbReference>
<dbReference type="HAMAP" id="MF_01576">
    <property type="entry name" value="THF_DHG_CYH"/>
    <property type="match status" value="1"/>
</dbReference>
<dbReference type="InterPro" id="IPR046346">
    <property type="entry name" value="Aminoacid_DH-like_N_sf"/>
</dbReference>
<dbReference type="InterPro" id="IPR036291">
    <property type="entry name" value="NAD(P)-bd_dom_sf"/>
</dbReference>
<dbReference type="InterPro" id="IPR000672">
    <property type="entry name" value="THF_DH/CycHdrlase"/>
</dbReference>
<dbReference type="InterPro" id="IPR020630">
    <property type="entry name" value="THF_DH/CycHdrlase_cat_dom"/>
</dbReference>
<dbReference type="InterPro" id="IPR020867">
    <property type="entry name" value="THF_DH/CycHdrlase_CS"/>
</dbReference>
<dbReference type="InterPro" id="IPR020631">
    <property type="entry name" value="THF_DH/CycHdrlase_NAD-bd_dom"/>
</dbReference>
<dbReference type="NCBIfam" id="NF008058">
    <property type="entry name" value="PRK10792.1"/>
    <property type="match status" value="1"/>
</dbReference>
<dbReference type="NCBIfam" id="NF010783">
    <property type="entry name" value="PRK14186.1"/>
    <property type="match status" value="1"/>
</dbReference>
<dbReference type="NCBIfam" id="NF010786">
    <property type="entry name" value="PRK14189.1"/>
    <property type="match status" value="1"/>
</dbReference>
<dbReference type="PANTHER" id="PTHR48099:SF5">
    <property type="entry name" value="C-1-TETRAHYDROFOLATE SYNTHASE, CYTOPLASMIC"/>
    <property type="match status" value="1"/>
</dbReference>
<dbReference type="PANTHER" id="PTHR48099">
    <property type="entry name" value="C-1-TETRAHYDROFOLATE SYNTHASE, CYTOPLASMIC-RELATED"/>
    <property type="match status" value="1"/>
</dbReference>
<dbReference type="Pfam" id="PF00763">
    <property type="entry name" value="THF_DHG_CYH"/>
    <property type="match status" value="1"/>
</dbReference>
<dbReference type="Pfam" id="PF02882">
    <property type="entry name" value="THF_DHG_CYH_C"/>
    <property type="match status" value="1"/>
</dbReference>
<dbReference type="PRINTS" id="PR00085">
    <property type="entry name" value="THFDHDRGNASE"/>
</dbReference>
<dbReference type="SUPFAM" id="SSF53223">
    <property type="entry name" value="Aminoacid dehydrogenase-like, N-terminal domain"/>
    <property type="match status" value="1"/>
</dbReference>
<dbReference type="SUPFAM" id="SSF51735">
    <property type="entry name" value="NAD(P)-binding Rossmann-fold domains"/>
    <property type="match status" value="1"/>
</dbReference>
<dbReference type="PROSITE" id="PS00766">
    <property type="entry name" value="THF_DHG_CYH_1"/>
    <property type="match status" value="1"/>
</dbReference>
<dbReference type="PROSITE" id="PS00767">
    <property type="entry name" value="THF_DHG_CYH_2"/>
    <property type="match status" value="1"/>
</dbReference>
<comment type="function">
    <text evidence="1">Catalyzes the oxidation of 5,10-methylenetetrahydrofolate to 5,10-methenyltetrahydrofolate and then the hydrolysis of 5,10-methenyltetrahydrofolate to 10-formyltetrahydrofolate.</text>
</comment>
<comment type="catalytic activity">
    <reaction evidence="1">
        <text>(6R)-5,10-methylene-5,6,7,8-tetrahydrofolate + NADP(+) = (6R)-5,10-methenyltetrahydrofolate + NADPH</text>
        <dbReference type="Rhea" id="RHEA:22812"/>
        <dbReference type="ChEBI" id="CHEBI:15636"/>
        <dbReference type="ChEBI" id="CHEBI:57455"/>
        <dbReference type="ChEBI" id="CHEBI:57783"/>
        <dbReference type="ChEBI" id="CHEBI:58349"/>
        <dbReference type="EC" id="1.5.1.5"/>
    </reaction>
</comment>
<comment type="catalytic activity">
    <reaction evidence="1">
        <text>(6R)-5,10-methenyltetrahydrofolate + H2O = (6R)-10-formyltetrahydrofolate + H(+)</text>
        <dbReference type="Rhea" id="RHEA:23700"/>
        <dbReference type="ChEBI" id="CHEBI:15377"/>
        <dbReference type="ChEBI" id="CHEBI:15378"/>
        <dbReference type="ChEBI" id="CHEBI:57455"/>
        <dbReference type="ChEBI" id="CHEBI:195366"/>
        <dbReference type="EC" id="3.5.4.9"/>
    </reaction>
</comment>
<comment type="pathway">
    <text evidence="1">One-carbon metabolism; tetrahydrofolate interconversion.</text>
</comment>
<comment type="subunit">
    <text evidence="1">Homodimer.</text>
</comment>
<comment type="similarity">
    <text evidence="1">Belongs to the tetrahydrofolate dehydrogenase/cyclohydrolase family.</text>
</comment>
<keyword id="KW-0028">Amino-acid biosynthesis</keyword>
<keyword id="KW-0368">Histidine biosynthesis</keyword>
<keyword id="KW-0378">Hydrolase</keyword>
<keyword id="KW-0486">Methionine biosynthesis</keyword>
<keyword id="KW-0511">Multifunctional enzyme</keyword>
<keyword id="KW-0521">NADP</keyword>
<keyword id="KW-0554">One-carbon metabolism</keyword>
<keyword id="KW-0560">Oxidoreductase</keyword>
<keyword id="KW-0658">Purine biosynthesis</keyword>
<keyword id="KW-1185">Reference proteome</keyword>
<feature type="chain" id="PRO_0000268472" description="Bifunctional protein FolD">
    <location>
        <begin position="1"/>
        <end position="287"/>
    </location>
</feature>
<feature type="binding site" evidence="1">
    <location>
        <begin position="169"/>
        <end position="171"/>
    </location>
    <ligand>
        <name>NADP(+)</name>
        <dbReference type="ChEBI" id="CHEBI:58349"/>
    </ligand>
</feature>
<feature type="binding site" evidence="1">
    <location>
        <position position="194"/>
    </location>
    <ligand>
        <name>NADP(+)</name>
        <dbReference type="ChEBI" id="CHEBI:58349"/>
    </ligand>
</feature>
<reference key="1">
    <citation type="submission" date="2006-02" db="EMBL/GenBank/DDBJ databases">
        <title>Complete sequence of chromosome of Rhodoferax ferrireducens DSM 15236.</title>
        <authorList>
            <person name="Copeland A."/>
            <person name="Lucas S."/>
            <person name="Lapidus A."/>
            <person name="Barry K."/>
            <person name="Detter J.C."/>
            <person name="Glavina del Rio T."/>
            <person name="Hammon N."/>
            <person name="Israni S."/>
            <person name="Pitluck S."/>
            <person name="Brettin T."/>
            <person name="Bruce D."/>
            <person name="Han C."/>
            <person name="Tapia R."/>
            <person name="Gilna P."/>
            <person name="Kiss H."/>
            <person name="Schmutz J."/>
            <person name="Larimer F."/>
            <person name="Land M."/>
            <person name="Kyrpides N."/>
            <person name="Ivanova N."/>
            <person name="Richardson P."/>
        </authorList>
    </citation>
    <scope>NUCLEOTIDE SEQUENCE [LARGE SCALE GENOMIC DNA]</scope>
    <source>
        <strain>ATCC BAA-621 / DSM 15236 / T118</strain>
    </source>
</reference>
<evidence type="ECO:0000255" key="1">
    <source>
        <dbReference type="HAMAP-Rule" id="MF_01576"/>
    </source>
</evidence>
<gene>
    <name evidence="1" type="primary">folD</name>
    <name type="ordered locus">Rfer_2209</name>
</gene>
<protein>
    <recommendedName>
        <fullName evidence="1">Bifunctional protein FolD</fullName>
    </recommendedName>
    <domain>
        <recommendedName>
            <fullName evidence="1">Methylenetetrahydrofolate dehydrogenase</fullName>
            <ecNumber evidence="1">1.5.1.5</ecNumber>
        </recommendedName>
    </domain>
    <domain>
        <recommendedName>
            <fullName evidence="1">Methenyltetrahydrofolate cyclohydrolase</fullName>
            <ecNumber evidence="1">3.5.4.9</ecNumber>
        </recommendedName>
    </domain>
</protein>
<sequence length="287" mass="30160">MTTQKFGQIIDGVALSAKLRADVATRVLALKARGVTPGLAVILVGEDPASAVYVRNKVKACQDTGVRSVFEKYEATLSEADLLARIAALNADPSIHGILVQMPIPKHINPHKVIEAISVTKDVDGYATLSAGELMTGAPGFRPCTPYGCMKLIETTGIDLRGKHAVVIGRSNTVGKPMALLLLQANATVTVCHSATRDIGYHTRQADVIVAAVGKRNVLTADMVKPGAVVIDVGMNRNDEGKLCGDVDFAGVKEVAGFITPVPGGVGPMTITMLLVNTLEAAERTVK</sequence>
<proteinExistence type="inferred from homology"/>
<organism>
    <name type="scientific">Albidiferax ferrireducens (strain ATCC BAA-621 / DSM 15236 / T118)</name>
    <name type="common">Rhodoferax ferrireducens</name>
    <dbReference type="NCBI Taxonomy" id="338969"/>
    <lineage>
        <taxon>Bacteria</taxon>
        <taxon>Pseudomonadati</taxon>
        <taxon>Pseudomonadota</taxon>
        <taxon>Betaproteobacteria</taxon>
        <taxon>Burkholderiales</taxon>
        <taxon>Comamonadaceae</taxon>
        <taxon>Rhodoferax</taxon>
    </lineage>
</organism>
<accession>Q21WC0</accession>
<name>FOLD_ALBFT</name>